<name>PGK1_RHINI</name>
<dbReference type="EC" id="2.7.2.3" evidence="3"/>
<dbReference type="EMBL" id="D10155">
    <property type="protein sequence ID" value="BAA01019.1"/>
    <property type="molecule type" value="Genomic_DNA"/>
</dbReference>
<dbReference type="PIR" id="S44062">
    <property type="entry name" value="S44062"/>
</dbReference>
<dbReference type="SMR" id="P29405"/>
<dbReference type="UniPathway" id="UPA00109">
    <property type="reaction ID" value="UER00185"/>
</dbReference>
<dbReference type="GO" id="GO:0005829">
    <property type="term" value="C:cytosol"/>
    <property type="evidence" value="ECO:0007669"/>
    <property type="project" value="TreeGrafter"/>
</dbReference>
<dbReference type="GO" id="GO:0005739">
    <property type="term" value="C:mitochondrion"/>
    <property type="evidence" value="ECO:0007669"/>
    <property type="project" value="UniProtKB-SubCell"/>
</dbReference>
<dbReference type="GO" id="GO:0043531">
    <property type="term" value="F:ADP binding"/>
    <property type="evidence" value="ECO:0007669"/>
    <property type="project" value="TreeGrafter"/>
</dbReference>
<dbReference type="GO" id="GO:0005524">
    <property type="term" value="F:ATP binding"/>
    <property type="evidence" value="ECO:0007669"/>
    <property type="project" value="UniProtKB-KW"/>
</dbReference>
<dbReference type="GO" id="GO:0046872">
    <property type="term" value="F:metal ion binding"/>
    <property type="evidence" value="ECO:0007669"/>
    <property type="project" value="UniProtKB-KW"/>
</dbReference>
<dbReference type="GO" id="GO:0004618">
    <property type="term" value="F:phosphoglycerate kinase activity"/>
    <property type="evidence" value="ECO:0007669"/>
    <property type="project" value="UniProtKB-EC"/>
</dbReference>
<dbReference type="GO" id="GO:0006094">
    <property type="term" value="P:gluconeogenesis"/>
    <property type="evidence" value="ECO:0007669"/>
    <property type="project" value="TreeGrafter"/>
</dbReference>
<dbReference type="GO" id="GO:0006096">
    <property type="term" value="P:glycolytic process"/>
    <property type="evidence" value="ECO:0007669"/>
    <property type="project" value="UniProtKB-UniPathway"/>
</dbReference>
<dbReference type="CDD" id="cd00318">
    <property type="entry name" value="Phosphoglycerate_kinase"/>
    <property type="match status" value="1"/>
</dbReference>
<dbReference type="FunFam" id="3.40.50.1260:FF:000003">
    <property type="entry name" value="Phosphoglycerate kinase"/>
    <property type="match status" value="1"/>
</dbReference>
<dbReference type="FunFam" id="3.40.50.1260:FF:000019">
    <property type="entry name" value="Phosphoglycerate kinase 1"/>
    <property type="match status" value="1"/>
</dbReference>
<dbReference type="Gene3D" id="3.40.50.1260">
    <property type="entry name" value="Phosphoglycerate kinase, N-terminal domain"/>
    <property type="match status" value="3"/>
</dbReference>
<dbReference type="HAMAP" id="MF_00145">
    <property type="entry name" value="Phosphoglyc_kinase"/>
    <property type="match status" value="1"/>
</dbReference>
<dbReference type="InterPro" id="IPR001576">
    <property type="entry name" value="Phosphoglycerate_kinase"/>
</dbReference>
<dbReference type="InterPro" id="IPR015911">
    <property type="entry name" value="Phosphoglycerate_kinase_CS"/>
</dbReference>
<dbReference type="InterPro" id="IPR015824">
    <property type="entry name" value="Phosphoglycerate_kinase_N"/>
</dbReference>
<dbReference type="InterPro" id="IPR036043">
    <property type="entry name" value="Phosphoglycerate_kinase_sf"/>
</dbReference>
<dbReference type="PANTHER" id="PTHR11406">
    <property type="entry name" value="PHOSPHOGLYCERATE KINASE"/>
    <property type="match status" value="1"/>
</dbReference>
<dbReference type="PANTHER" id="PTHR11406:SF0">
    <property type="entry name" value="PHOSPHOGLYCERATE KINASE"/>
    <property type="match status" value="1"/>
</dbReference>
<dbReference type="Pfam" id="PF00162">
    <property type="entry name" value="PGK"/>
    <property type="match status" value="1"/>
</dbReference>
<dbReference type="PIRSF" id="PIRSF000724">
    <property type="entry name" value="Pgk"/>
    <property type="match status" value="1"/>
</dbReference>
<dbReference type="PRINTS" id="PR00477">
    <property type="entry name" value="PHGLYCKINASE"/>
</dbReference>
<dbReference type="SUPFAM" id="SSF53748">
    <property type="entry name" value="Phosphoglycerate kinase"/>
    <property type="match status" value="1"/>
</dbReference>
<dbReference type="PROSITE" id="PS00111">
    <property type="entry name" value="PGLYCERATE_KINASE"/>
    <property type="match status" value="1"/>
</dbReference>
<comment type="function">
    <text evidence="1 2 3">Catalyzes one of the two ATP producing reactions in the glycolytic pathway via the reversible conversion of 1,3-diphosphoglycerate to 3-phosphoglycerate (By similarity). Both L- and D- forms of purine and pyrimidine nucleotides can be used as substrates, but the activity is much lower on pyrimidines (By similarity). Negatively regulates the biosynthesis of acetyl-CoA from pyruvate in the mitochondrion (By similarity).</text>
</comment>
<comment type="catalytic activity">
    <reaction evidence="3">
        <text>(2R)-3-phosphoglycerate + ATP = (2R)-3-phospho-glyceroyl phosphate + ADP</text>
        <dbReference type="Rhea" id="RHEA:14801"/>
        <dbReference type="ChEBI" id="CHEBI:30616"/>
        <dbReference type="ChEBI" id="CHEBI:57604"/>
        <dbReference type="ChEBI" id="CHEBI:58272"/>
        <dbReference type="ChEBI" id="CHEBI:456216"/>
        <dbReference type="EC" id="2.7.2.3"/>
    </reaction>
</comment>
<comment type="cofactor">
    <cofactor evidence="2">
        <name>Mg(2+)</name>
        <dbReference type="ChEBI" id="CHEBI:18420"/>
    </cofactor>
</comment>
<comment type="pathway">
    <text evidence="3">Carbohydrate degradation; glycolysis; pyruvate from D-glyceraldehyde 3-phosphate: step 2/5.</text>
</comment>
<comment type="subunit">
    <text>Monomer.</text>
</comment>
<comment type="subcellular location">
    <subcellularLocation>
        <location evidence="3">Cytoplasm</location>
    </subcellularLocation>
    <subcellularLocation>
        <location evidence="3">Mitochondrion</location>
    </subcellularLocation>
</comment>
<comment type="similarity">
    <text evidence="5">Belongs to the phosphoglycerate kinase family.</text>
</comment>
<sequence length="417" mass="44655">MSLSNKLSIRDLNLKDKRVLIRVDFNVPMKDGAITNNNRIVQALPTVKYALDNGASAVILMSHLGRPNGEAVAKYSLKPVAAEVEKLLGKPVEFLNDCVGPDVEKACQSAKDGKVILLENLRFHIEEEGSAKVDGQKVKADAEAIKKFRASLTTLADIYINDAFGTAHRAHSSMVGVDLSQRAAGFLMQKELEYFAKALENPSRPFLAILGGAKVSDKIQLIENMLDKVNALIICGGMAFTFKKTLDNVKIGKSLFDEPGSKLVQNLVKKAAEKNVKIVFPVDFITADKFAPDASTGYATDDDGIPDGWQGLDCGERSNKLFREEILKSKTIVWNGPSGVFEFDAFSSGTKAVLDAVINATKEGATTIIIGGGDTATAALKWGAEGQVSHISTGGGASLELLEGKELPGVTALSSKN</sequence>
<reference key="1">
    <citation type="journal article" date="1994" name="Curr. Genet.">
        <title>Cloning and characterization of two 3-phosphoglycerate kinase genes of Rhizopus niveus and heterologous gene expression using their promoters.</title>
        <authorList>
            <person name="Yanai K."/>
            <person name="Tanaka N."/>
            <person name="Horiuchi H."/>
            <person name="Ohta A."/>
            <person name="Takagi M."/>
        </authorList>
    </citation>
    <scope>NUCLEOTIDE SEQUENCE [GENOMIC DNA]</scope>
    <source>
        <strain>NBRC 4810 / AS 3.4817</strain>
    </source>
</reference>
<gene>
    <name type="primary">PGK1</name>
</gene>
<evidence type="ECO:0000250" key="1">
    <source>
        <dbReference type="UniProtKB" id="A0A7G5KET3"/>
    </source>
</evidence>
<evidence type="ECO:0000250" key="2">
    <source>
        <dbReference type="UniProtKB" id="P00558"/>
    </source>
</evidence>
<evidence type="ECO:0000250" key="3">
    <source>
        <dbReference type="UniProtKB" id="P00560"/>
    </source>
</evidence>
<evidence type="ECO:0000250" key="4">
    <source>
        <dbReference type="UniProtKB" id="Q7SIB7"/>
    </source>
</evidence>
<evidence type="ECO:0000305" key="5"/>
<accession>P29405</accession>
<organism>
    <name type="scientific">Rhizopus niveus</name>
    <dbReference type="NCBI Taxonomy" id="4844"/>
    <lineage>
        <taxon>Eukaryota</taxon>
        <taxon>Fungi</taxon>
        <taxon>Fungi incertae sedis</taxon>
        <taxon>Mucoromycota</taxon>
        <taxon>Mucoromycotina</taxon>
        <taxon>Mucoromycetes</taxon>
        <taxon>Mucorales</taxon>
        <taxon>Mucorineae</taxon>
        <taxon>Rhizopodaceae</taxon>
        <taxon>Rhizopus</taxon>
    </lineage>
</organism>
<feature type="chain" id="PRO_0000145887" description="Phosphoglycerate kinase 1">
    <location>
        <begin position="1"/>
        <end position="417"/>
    </location>
</feature>
<feature type="binding site" evidence="2">
    <location>
        <position position="23"/>
    </location>
    <ligand>
        <name>(2R)-3-phosphoglycerate</name>
        <dbReference type="ChEBI" id="CHEBI:58272"/>
    </ligand>
</feature>
<feature type="binding site" evidence="4">
    <location>
        <position position="24"/>
    </location>
    <ligand>
        <name>(2R)-3-phosphoglycerate</name>
        <dbReference type="ChEBI" id="CHEBI:58272"/>
    </ligand>
</feature>
<feature type="binding site" evidence="2">
    <location>
        <position position="25"/>
    </location>
    <ligand>
        <name>(2R)-3-phosphoglycerate</name>
        <dbReference type="ChEBI" id="CHEBI:58272"/>
    </ligand>
</feature>
<feature type="binding site" evidence="4">
    <location>
        <position position="26"/>
    </location>
    <ligand>
        <name>(2R)-3-phosphoglycerate</name>
        <dbReference type="ChEBI" id="CHEBI:58272"/>
    </ligand>
</feature>
<feature type="binding site" evidence="2">
    <location>
        <position position="38"/>
    </location>
    <ligand>
        <name>(2R)-3-phosphoglycerate</name>
        <dbReference type="ChEBI" id="CHEBI:58272"/>
    </ligand>
</feature>
<feature type="binding site" evidence="4">
    <location>
        <position position="39"/>
    </location>
    <ligand>
        <name>(2R)-3-phosphoglycerate</name>
        <dbReference type="ChEBI" id="CHEBI:58272"/>
    </ligand>
</feature>
<feature type="binding site" evidence="2">
    <location>
        <position position="62"/>
    </location>
    <ligand>
        <name>(2R)-3-phosphoglycerate</name>
        <dbReference type="ChEBI" id="CHEBI:58272"/>
    </ligand>
</feature>
<feature type="binding site" evidence="4">
    <location>
        <position position="63"/>
    </location>
    <ligand>
        <name>(2R)-3-phosphoglycerate</name>
        <dbReference type="ChEBI" id="CHEBI:58272"/>
    </ligand>
</feature>
<feature type="binding site" evidence="2">
    <location>
        <position position="65"/>
    </location>
    <ligand>
        <name>(2R)-3-phosphoglycerate</name>
        <dbReference type="ChEBI" id="CHEBI:58272"/>
    </ligand>
</feature>
<feature type="binding site" evidence="4">
    <location>
        <position position="66"/>
    </location>
    <ligand>
        <name>(2R)-3-phosphoglycerate</name>
        <dbReference type="ChEBI" id="CHEBI:58272"/>
    </ligand>
</feature>
<feature type="binding site" evidence="2">
    <location>
        <position position="121"/>
    </location>
    <ligand>
        <name>(2R)-3-phosphoglycerate</name>
        <dbReference type="ChEBI" id="CHEBI:58272"/>
    </ligand>
</feature>
<feature type="binding site" evidence="4">
    <location>
        <position position="122"/>
    </location>
    <ligand>
        <name>(2R)-3-phosphoglycerate</name>
        <dbReference type="ChEBI" id="CHEBI:58272"/>
    </ligand>
</feature>
<feature type="binding site" evidence="2">
    <location>
        <position position="168"/>
    </location>
    <ligand>
        <name>(2R)-3-phosphoglycerate</name>
        <dbReference type="ChEBI" id="CHEBI:58272"/>
    </ligand>
</feature>
<feature type="binding site" evidence="4">
    <location>
        <position position="169"/>
    </location>
    <ligand>
        <name>(2R)-3-phosphoglycerate</name>
        <dbReference type="ChEBI" id="CHEBI:58272"/>
    </ligand>
</feature>
<feature type="binding site" evidence="2">
    <location>
        <position position="212"/>
    </location>
    <ligand>
        <name>ADP</name>
        <dbReference type="ChEBI" id="CHEBI:456216"/>
    </ligand>
</feature>
<feature type="binding site" evidence="2">
    <location>
        <position position="212"/>
    </location>
    <ligand>
        <name>CDP</name>
        <dbReference type="ChEBI" id="CHEBI:58069"/>
    </ligand>
</feature>
<feature type="binding site" evidence="4">
    <location>
        <position position="213"/>
    </location>
    <ligand>
        <name>AMP</name>
        <dbReference type="ChEBI" id="CHEBI:456215"/>
    </ligand>
</feature>
<feature type="binding site" evidence="4">
    <location>
        <position position="213"/>
    </location>
    <ligand>
        <name>ATP</name>
        <dbReference type="ChEBI" id="CHEBI:30616"/>
    </ligand>
</feature>
<feature type="binding site" evidence="2">
    <location>
        <position position="213"/>
    </location>
    <ligand>
        <name>Mg(2+)</name>
        <dbReference type="ChEBI" id="CHEBI:18420"/>
    </ligand>
</feature>
<feature type="binding site" evidence="4">
    <location>
        <position position="214"/>
    </location>
    <ligand>
        <name>AMP</name>
        <dbReference type="ChEBI" id="CHEBI:456215"/>
    </ligand>
</feature>
<feature type="binding site" evidence="2">
    <location>
        <position position="217"/>
    </location>
    <ligand>
        <name>CDP</name>
        <dbReference type="ChEBI" id="CHEBI:58069"/>
    </ligand>
</feature>
<feature type="binding site" evidence="2">
    <location>
        <position position="217"/>
    </location>
    <ligand>
        <name>Mg(2+)</name>
        <dbReference type="ChEBI" id="CHEBI:18420"/>
    </ligand>
</feature>
<feature type="binding site" evidence="4">
    <location>
        <position position="218"/>
    </location>
    <ligand>
        <name>AMP</name>
        <dbReference type="ChEBI" id="CHEBI:456215"/>
    </ligand>
</feature>
<feature type="binding site" evidence="4">
    <location>
        <position position="218"/>
    </location>
    <ligand>
        <name>ATP</name>
        <dbReference type="ChEBI" id="CHEBI:30616"/>
    </ligand>
</feature>
<feature type="binding site" evidence="2">
    <location>
        <position position="236"/>
    </location>
    <ligand>
        <name>ADP</name>
        <dbReference type="ChEBI" id="CHEBI:456216"/>
    </ligand>
</feature>
<feature type="binding site" evidence="2">
    <location>
        <position position="236"/>
    </location>
    <ligand>
        <name>CDP</name>
        <dbReference type="ChEBI" id="CHEBI:58069"/>
    </ligand>
</feature>
<feature type="binding site" evidence="4">
    <location>
        <position position="237"/>
    </location>
    <ligand>
        <name>AMP</name>
        <dbReference type="ChEBI" id="CHEBI:456215"/>
    </ligand>
</feature>
<feature type="binding site" evidence="4">
    <location>
        <position position="237"/>
    </location>
    <ligand>
        <name>ATP</name>
        <dbReference type="ChEBI" id="CHEBI:30616"/>
    </ligand>
</feature>
<feature type="binding site" evidence="4">
    <location>
        <position position="311"/>
    </location>
    <ligand>
        <name>AMP</name>
        <dbReference type="ChEBI" id="CHEBI:456215"/>
    </ligand>
</feature>
<feature type="binding site" evidence="4">
    <location>
        <position position="311"/>
    </location>
    <ligand>
        <name>ATP</name>
        <dbReference type="ChEBI" id="CHEBI:30616"/>
    </ligand>
</feature>
<feature type="binding site" evidence="2">
    <location>
        <position position="336"/>
    </location>
    <ligand>
        <name>CDP</name>
        <dbReference type="ChEBI" id="CHEBI:58069"/>
    </ligand>
</feature>
<feature type="binding site" evidence="2">
    <location>
        <position position="341"/>
    </location>
    <ligand>
        <name>ADP</name>
        <dbReference type="ChEBI" id="CHEBI:456216"/>
    </ligand>
</feature>
<feature type="binding site" evidence="2">
    <location>
        <position position="341"/>
    </location>
    <ligand>
        <name>CDP</name>
        <dbReference type="ChEBI" id="CHEBI:58069"/>
    </ligand>
</feature>
<feature type="binding site" evidence="4">
    <location>
        <position position="342"/>
    </location>
    <ligand>
        <name>AMP</name>
        <dbReference type="ChEBI" id="CHEBI:456215"/>
    </ligand>
</feature>
<feature type="binding site" evidence="4">
    <location>
        <position position="342"/>
    </location>
    <ligand>
        <name>ATP</name>
        <dbReference type="ChEBI" id="CHEBI:30616"/>
    </ligand>
</feature>
<feature type="binding site" evidence="4">
    <location>
        <position position="374"/>
    </location>
    <ligand>
        <name>ATP</name>
        <dbReference type="ChEBI" id="CHEBI:30616"/>
    </ligand>
</feature>
<feature type="binding site" evidence="4">
    <location>
        <position position="374"/>
    </location>
    <ligand>
        <name>Mg(2+)</name>
        <dbReference type="ChEBI" id="CHEBI:18420"/>
    </ligand>
</feature>
<feature type="binding site" evidence="4">
    <location>
        <position position="375"/>
    </location>
    <ligand>
        <name>ATP</name>
        <dbReference type="ChEBI" id="CHEBI:30616"/>
    </ligand>
</feature>
<keyword id="KW-0067">ATP-binding</keyword>
<keyword id="KW-0963">Cytoplasm</keyword>
<keyword id="KW-0324">Glycolysis</keyword>
<keyword id="KW-0418">Kinase</keyword>
<keyword id="KW-0460">Magnesium</keyword>
<keyword id="KW-0479">Metal-binding</keyword>
<keyword id="KW-0496">Mitochondrion</keyword>
<keyword id="KW-0547">Nucleotide-binding</keyword>
<keyword id="KW-0808">Transferase</keyword>
<protein>
    <recommendedName>
        <fullName>Phosphoglycerate kinase 1</fullName>
        <ecNumber evidence="3">2.7.2.3</ecNumber>
    </recommendedName>
</protein>
<proteinExistence type="inferred from homology"/>